<gene>
    <name type="primary">aldh8a1</name>
</gene>
<keyword id="KW-0963">Cytoplasm</keyword>
<keyword id="KW-0520">NAD</keyword>
<keyword id="KW-0560">Oxidoreductase</keyword>
<keyword id="KW-1185">Reference proteome</keyword>
<evidence type="ECO:0000250" key="1"/>
<evidence type="ECO:0000250" key="2">
    <source>
        <dbReference type="UniProtKB" id="Q9H2A2"/>
    </source>
</evidence>
<evidence type="ECO:0000255" key="3">
    <source>
        <dbReference type="PROSITE-ProRule" id="PRU10007"/>
    </source>
</evidence>
<evidence type="ECO:0000255" key="4">
    <source>
        <dbReference type="PROSITE-ProRule" id="PRU10008"/>
    </source>
</evidence>
<evidence type="ECO:0000305" key="5"/>
<protein>
    <recommendedName>
        <fullName>2-aminomuconic semialdehyde dehydrogenase</fullName>
        <ecNumber evidence="2">1.2.1.32</ecNumber>
    </recommendedName>
    <alternativeName>
        <fullName>Aldehyde dehydrogenase family 8 member A1</fullName>
    </alternativeName>
</protein>
<proteinExistence type="evidence at transcript level"/>
<dbReference type="EC" id="1.2.1.32" evidence="2"/>
<dbReference type="EMBL" id="BC081581">
    <property type="protein sequence ID" value="AAH81581.1"/>
    <property type="molecule type" value="mRNA"/>
</dbReference>
<dbReference type="EMBL" id="BC152164">
    <property type="protein sequence ID" value="AAI52165.1"/>
    <property type="molecule type" value="mRNA"/>
</dbReference>
<dbReference type="RefSeq" id="NP_001004540.1">
    <property type="nucleotide sequence ID" value="NM_001004540.1"/>
</dbReference>
<dbReference type="SMR" id="Q66I21"/>
<dbReference type="FunCoup" id="Q66I21">
    <property type="interactions" value="5"/>
</dbReference>
<dbReference type="STRING" id="7955.ENSDARP00000053398"/>
<dbReference type="PaxDb" id="7955-ENSDARP00000053398"/>
<dbReference type="Ensembl" id="ENSDART00000053399">
    <property type="protein sequence ID" value="ENSDARP00000053398"/>
    <property type="gene ID" value="ENSDARG00000036776"/>
</dbReference>
<dbReference type="GeneID" id="447801"/>
<dbReference type="KEGG" id="dre:447801"/>
<dbReference type="AGR" id="ZFIN:ZDB-GENE-040912-3"/>
<dbReference type="CTD" id="64577"/>
<dbReference type="ZFIN" id="ZDB-GENE-040912-3">
    <property type="gene designation" value="aldh8a1"/>
</dbReference>
<dbReference type="eggNOG" id="KOG2450">
    <property type="taxonomic scope" value="Eukaryota"/>
</dbReference>
<dbReference type="HOGENOM" id="CLU_005391_0_2_1"/>
<dbReference type="InParanoid" id="Q66I21"/>
<dbReference type="OMA" id="INGGPFN"/>
<dbReference type="OrthoDB" id="310895at2759"/>
<dbReference type="PhylomeDB" id="Q66I21"/>
<dbReference type="TreeFam" id="TF314129"/>
<dbReference type="Reactome" id="R-DRE-5365859">
    <property type="pathway name" value="RA biosynthesis pathway"/>
</dbReference>
<dbReference type="UniPathway" id="UPA00334"/>
<dbReference type="PRO" id="PR:Q66I21"/>
<dbReference type="Proteomes" id="UP000000437">
    <property type="component" value="Alternate scaffold 23"/>
</dbReference>
<dbReference type="Proteomes" id="UP000000437">
    <property type="component" value="Chromosome 23"/>
</dbReference>
<dbReference type="Bgee" id="ENSDARG00000036776">
    <property type="expression patterns" value="Expressed in liver and 19 other cell types or tissues"/>
</dbReference>
<dbReference type="ExpressionAtlas" id="Q66I21">
    <property type="expression patterns" value="baseline"/>
</dbReference>
<dbReference type="GO" id="GO:0005737">
    <property type="term" value="C:cytoplasm"/>
    <property type="evidence" value="ECO:0007669"/>
    <property type="project" value="UniProtKB-SubCell"/>
</dbReference>
<dbReference type="GO" id="GO:0047102">
    <property type="term" value="F:aminomuconate-semialdehyde dehydrogenase activity"/>
    <property type="evidence" value="ECO:0007669"/>
    <property type="project" value="UniProtKB-EC"/>
</dbReference>
<dbReference type="GO" id="GO:0001758">
    <property type="term" value="F:retinal dehydrogenase activity"/>
    <property type="evidence" value="ECO:0000318"/>
    <property type="project" value="GO_Central"/>
</dbReference>
<dbReference type="GO" id="GO:0097053">
    <property type="term" value="P:L-kynurenine catabolic process"/>
    <property type="evidence" value="ECO:0007669"/>
    <property type="project" value="UniProtKB-UniPathway"/>
</dbReference>
<dbReference type="GO" id="GO:0001889">
    <property type="term" value="P:liver development"/>
    <property type="evidence" value="ECO:0000315"/>
    <property type="project" value="ZFIN"/>
</dbReference>
<dbReference type="GO" id="GO:0042573">
    <property type="term" value="P:retinoic acid metabolic process"/>
    <property type="evidence" value="ECO:0000318"/>
    <property type="project" value="GO_Central"/>
</dbReference>
<dbReference type="CDD" id="cd07093">
    <property type="entry name" value="ALDH_F8_HMSADH"/>
    <property type="match status" value="1"/>
</dbReference>
<dbReference type="FunFam" id="3.40.605.10:FF:000001">
    <property type="entry name" value="Aldehyde dehydrogenase 1"/>
    <property type="match status" value="1"/>
</dbReference>
<dbReference type="FunFam" id="3.40.309.10:FF:000021">
    <property type="entry name" value="Aldehyde dehydrogenase family 8 member A1"/>
    <property type="match status" value="1"/>
</dbReference>
<dbReference type="Gene3D" id="3.40.605.10">
    <property type="entry name" value="Aldehyde Dehydrogenase, Chain A, domain 1"/>
    <property type="match status" value="1"/>
</dbReference>
<dbReference type="Gene3D" id="3.40.309.10">
    <property type="entry name" value="Aldehyde Dehydrogenase, Chain A, domain 2"/>
    <property type="match status" value="1"/>
</dbReference>
<dbReference type="InterPro" id="IPR016161">
    <property type="entry name" value="Ald_DH/histidinol_DH"/>
</dbReference>
<dbReference type="InterPro" id="IPR016163">
    <property type="entry name" value="Ald_DH_C"/>
</dbReference>
<dbReference type="InterPro" id="IPR016160">
    <property type="entry name" value="Ald_DH_CS_CYS"/>
</dbReference>
<dbReference type="InterPro" id="IPR029510">
    <property type="entry name" value="Ald_DH_CS_GLU"/>
</dbReference>
<dbReference type="InterPro" id="IPR016162">
    <property type="entry name" value="Ald_DH_N"/>
</dbReference>
<dbReference type="InterPro" id="IPR015590">
    <property type="entry name" value="Aldehyde_DH_dom"/>
</dbReference>
<dbReference type="PANTHER" id="PTHR43720">
    <property type="entry name" value="2-AMINOMUCONIC SEMIALDEHYDE DEHYDROGENASE"/>
    <property type="match status" value="1"/>
</dbReference>
<dbReference type="PANTHER" id="PTHR43720:SF2">
    <property type="entry name" value="2-AMINOMUCONIC SEMIALDEHYDE DEHYDROGENASE"/>
    <property type="match status" value="1"/>
</dbReference>
<dbReference type="Pfam" id="PF00171">
    <property type="entry name" value="Aldedh"/>
    <property type="match status" value="1"/>
</dbReference>
<dbReference type="SUPFAM" id="SSF53720">
    <property type="entry name" value="ALDH-like"/>
    <property type="match status" value="1"/>
</dbReference>
<dbReference type="PROSITE" id="PS00070">
    <property type="entry name" value="ALDEHYDE_DEHYDR_CYS"/>
    <property type="match status" value="1"/>
</dbReference>
<dbReference type="PROSITE" id="PS00687">
    <property type="entry name" value="ALDEHYDE_DEHYDR_GLU"/>
    <property type="match status" value="1"/>
</dbReference>
<comment type="function">
    <text evidence="2">Catalyzes the NAD-dependent oxidation of 2-aminomuconic semialdehyde of the kynurenine metabolic pathway in L-tryptophan degradation.</text>
</comment>
<comment type="catalytic activity">
    <reaction evidence="2">
        <text>2-aminomuconate 6-semialdehyde + NAD(+) + H2O = (2Z,4E)-2-aminomuconate + NADH + 2 H(+)</text>
        <dbReference type="Rhea" id="RHEA:14469"/>
        <dbReference type="ChEBI" id="CHEBI:15377"/>
        <dbReference type="ChEBI" id="CHEBI:15378"/>
        <dbReference type="ChEBI" id="CHEBI:57540"/>
        <dbReference type="ChEBI" id="CHEBI:57945"/>
        <dbReference type="ChEBI" id="CHEBI:77634"/>
        <dbReference type="ChEBI" id="CHEBI:77859"/>
        <dbReference type="EC" id="1.2.1.32"/>
    </reaction>
</comment>
<comment type="pathway">
    <text evidence="2">Amino-acid degradation; L-kynurenine degradation.</text>
</comment>
<comment type="subcellular location">
    <subcellularLocation>
        <location evidence="1">Cytoplasm</location>
    </subcellularLocation>
</comment>
<comment type="similarity">
    <text evidence="5">Belongs to the aldehyde dehydrogenase family.</text>
</comment>
<sequence>MSKDMKYLVLENYIGGKFVPCSKLIDSFDPSTGEVYCKVPDSGAEEVNAAVRAAKEAFPDWSAKSPADRSKVLNKLADLIEARLEEFVQAESKDQGKTITFARNVDIPRSAYNFRFFASSVLHHTNDCSQMDHMGCLNYTIRCPVGVAGLISPWNLPLYLLTWKIAPAVATGNTVVAKPSEMTSVTAWMMCQLLEEAGFPPGVVNIVFGTGPRAGDALVSHPDVPLISFTGSTATARLITERSAPHCKKLSLELGGKNPAIIFADADMEQCISTTVRSSFSNQGEICLCTSRIFVERSVYPEFLTRFVEATRRWKTGVPSDPSNDNGALISKEHLQKVKGYITLALAEGAQVHCGEGVDKLALPQQNIGGYFMLPTIISGVKDSSALMQEEIFGPVTCVTPFDEEEEVISRANNVRYGLSATVWSRDVGRVHRVARKLQAGLVWTNCWLVRDLNLPFGGMKHSGIGREGGKDSYHFFTEVKSVTVKH</sequence>
<reference key="1">
    <citation type="submission" date="2007-08" db="EMBL/GenBank/DDBJ databases">
        <authorList>
            <consortium name="NIH - Zebrafish Gene Collection (ZGC) project"/>
        </authorList>
    </citation>
    <scope>NUCLEOTIDE SEQUENCE [LARGE SCALE MRNA]</scope>
    <source>
        <tissue>Intestine</tissue>
    </source>
</reference>
<accession>Q66I21</accession>
<organism>
    <name type="scientific">Danio rerio</name>
    <name type="common">Zebrafish</name>
    <name type="synonym">Brachydanio rerio</name>
    <dbReference type="NCBI Taxonomy" id="7955"/>
    <lineage>
        <taxon>Eukaryota</taxon>
        <taxon>Metazoa</taxon>
        <taxon>Chordata</taxon>
        <taxon>Craniata</taxon>
        <taxon>Vertebrata</taxon>
        <taxon>Euteleostomi</taxon>
        <taxon>Actinopterygii</taxon>
        <taxon>Neopterygii</taxon>
        <taxon>Teleostei</taxon>
        <taxon>Ostariophysi</taxon>
        <taxon>Cypriniformes</taxon>
        <taxon>Danionidae</taxon>
        <taxon>Danioninae</taxon>
        <taxon>Danio</taxon>
    </lineage>
</organism>
<feature type="chain" id="PRO_0000312956" description="2-aminomuconic semialdehyde dehydrogenase">
    <location>
        <begin position="1"/>
        <end position="487"/>
    </location>
</feature>
<feature type="active site" description="Proton acceptor" evidence="3 4">
    <location>
        <position position="253"/>
    </location>
</feature>
<feature type="active site" description="Nucleophile" evidence="3 4">
    <location>
        <position position="287"/>
    </location>
</feature>
<feature type="binding site" evidence="1">
    <location>
        <begin position="231"/>
        <end position="236"/>
    </location>
    <ligand>
        <name>NAD(+)</name>
        <dbReference type="ChEBI" id="CHEBI:57540"/>
    </ligand>
</feature>
<feature type="site" description="Transition state stabilizer" evidence="1">
    <location>
        <position position="155"/>
    </location>
</feature>
<name>AL8A1_DANRE</name>